<gene>
    <name type="ordered locus">SGR_564</name>
</gene>
<evidence type="ECO:0000255" key="1">
    <source>
        <dbReference type="HAMAP-Rule" id="MF_01656"/>
    </source>
</evidence>
<comment type="catalytic activity">
    <reaction evidence="1">
        <text>(S)-4-hydroxy-2-oxopentanoate = acetaldehyde + pyruvate</text>
        <dbReference type="Rhea" id="RHEA:22624"/>
        <dbReference type="ChEBI" id="CHEBI:15343"/>
        <dbReference type="ChEBI" id="CHEBI:15361"/>
        <dbReference type="ChEBI" id="CHEBI:73143"/>
        <dbReference type="EC" id="4.1.3.39"/>
    </reaction>
</comment>
<comment type="similarity">
    <text evidence="1">Belongs to the 4-hydroxy-2-oxovalerate aldolase family.</text>
</comment>
<name>HOA_STRGG</name>
<proteinExistence type="inferred from homology"/>
<dbReference type="EC" id="4.1.3.39" evidence="1"/>
<dbReference type="EMBL" id="AP009493">
    <property type="protein sequence ID" value="BAG17393.1"/>
    <property type="molecule type" value="Genomic_DNA"/>
</dbReference>
<dbReference type="SMR" id="B1VRH5"/>
<dbReference type="KEGG" id="sgr:SGR_564"/>
<dbReference type="eggNOG" id="COG0119">
    <property type="taxonomic scope" value="Bacteria"/>
</dbReference>
<dbReference type="HOGENOM" id="CLU_049173_0_0_11"/>
<dbReference type="Proteomes" id="UP000001685">
    <property type="component" value="Chromosome"/>
</dbReference>
<dbReference type="GO" id="GO:0003852">
    <property type="term" value="F:2-isopropylmalate synthase activity"/>
    <property type="evidence" value="ECO:0007669"/>
    <property type="project" value="TreeGrafter"/>
</dbReference>
<dbReference type="GO" id="GO:0008701">
    <property type="term" value="F:4-hydroxy-2-oxovalerate aldolase activity"/>
    <property type="evidence" value="ECO:0007669"/>
    <property type="project" value="UniProtKB-UniRule"/>
</dbReference>
<dbReference type="GO" id="GO:0030145">
    <property type="term" value="F:manganese ion binding"/>
    <property type="evidence" value="ECO:0007669"/>
    <property type="project" value="UniProtKB-UniRule"/>
</dbReference>
<dbReference type="GO" id="GO:0009056">
    <property type="term" value="P:catabolic process"/>
    <property type="evidence" value="ECO:0007669"/>
    <property type="project" value="UniProtKB-KW"/>
</dbReference>
<dbReference type="GO" id="GO:0009098">
    <property type="term" value="P:L-leucine biosynthetic process"/>
    <property type="evidence" value="ECO:0007669"/>
    <property type="project" value="TreeGrafter"/>
</dbReference>
<dbReference type="CDD" id="cd07943">
    <property type="entry name" value="DRE_TIM_HOA"/>
    <property type="match status" value="1"/>
</dbReference>
<dbReference type="Gene3D" id="1.10.8.60">
    <property type="match status" value="1"/>
</dbReference>
<dbReference type="Gene3D" id="3.20.20.70">
    <property type="entry name" value="Aldolase class I"/>
    <property type="match status" value="1"/>
</dbReference>
<dbReference type="HAMAP" id="MF_01656">
    <property type="entry name" value="HOA"/>
    <property type="match status" value="1"/>
</dbReference>
<dbReference type="InterPro" id="IPR050073">
    <property type="entry name" value="2-IPM_HCS-like"/>
</dbReference>
<dbReference type="InterPro" id="IPR017629">
    <property type="entry name" value="4OH_2_O-val_aldolase"/>
</dbReference>
<dbReference type="InterPro" id="IPR013785">
    <property type="entry name" value="Aldolase_TIM"/>
</dbReference>
<dbReference type="InterPro" id="IPR012425">
    <property type="entry name" value="DmpG_comm"/>
</dbReference>
<dbReference type="InterPro" id="IPR035685">
    <property type="entry name" value="DRE_TIM_HOA"/>
</dbReference>
<dbReference type="InterPro" id="IPR000891">
    <property type="entry name" value="PYR_CT"/>
</dbReference>
<dbReference type="NCBIfam" id="TIGR03217">
    <property type="entry name" value="4OH_2_O_val_ald"/>
    <property type="match status" value="1"/>
</dbReference>
<dbReference type="NCBIfam" id="NF006049">
    <property type="entry name" value="PRK08195.1"/>
    <property type="match status" value="1"/>
</dbReference>
<dbReference type="PANTHER" id="PTHR10277:SF9">
    <property type="entry name" value="2-ISOPROPYLMALATE SYNTHASE 1, CHLOROPLASTIC-RELATED"/>
    <property type="match status" value="1"/>
</dbReference>
<dbReference type="PANTHER" id="PTHR10277">
    <property type="entry name" value="HOMOCITRATE SYNTHASE-RELATED"/>
    <property type="match status" value="1"/>
</dbReference>
<dbReference type="Pfam" id="PF07836">
    <property type="entry name" value="DmpG_comm"/>
    <property type="match status" value="1"/>
</dbReference>
<dbReference type="Pfam" id="PF00682">
    <property type="entry name" value="HMGL-like"/>
    <property type="match status" value="1"/>
</dbReference>
<dbReference type="SUPFAM" id="SSF51569">
    <property type="entry name" value="Aldolase"/>
    <property type="match status" value="1"/>
</dbReference>
<dbReference type="SUPFAM" id="SSF89000">
    <property type="entry name" value="post-HMGL domain-like"/>
    <property type="match status" value="1"/>
</dbReference>
<dbReference type="PROSITE" id="PS50991">
    <property type="entry name" value="PYR_CT"/>
    <property type="match status" value="1"/>
</dbReference>
<organism>
    <name type="scientific">Streptomyces griseus subsp. griseus (strain JCM 4626 / CBS 651.72 / NBRC 13350 / KCC S-0626 / ISP 5235)</name>
    <dbReference type="NCBI Taxonomy" id="455632"/>
    <lineage>
        <taxon>Bacteria</taxon>
        <taxon>Bacillati</taxon>
        <taxon>Actinomycetota</taxon>
        <taxon>Actinomycetes</taxon>
        <taxon>Kitasatosporales</taxon>
        <taxon>Streptomycetaceae</taxon>
        <taxon>Streptomyces</taxon>
    </lineage>
</organism>
<sequence>MKQVVIHDPTLRDGQHAVHHRLGLTELRRYAEAADAARVPVVEVGHGNGLGASSLQVGLAAATDDAMLSTVREALRHSRLGTFMLPGWGTSDDLRRAISHGVDVFRVGVHATEASLAEHHLGFLRDAGAEAHCVLMMSHMASPGELAEQAARAVGYGAQAVGIMDSAGHFLPPDVTARIGAIVEAVGTVPVIFHGHNNLGMAVANSVAAAEAGARIIDGCARGFGAGAGNTQLEVLVPVLERSGFATGIDLYALLDAADLAERELMPAPPVPASMSIVSGLAGVFSGFKHRVVELAGAAGVDPREVFFELGRRQAIAGQEDLIVDVVAELSGRGPKTDAA</sequence>
<protein>
    <recommendedName>
        <fullName evidence="1">4-hydroxy-2-oxovalerate aldolase</fullName>
        <shortName evidence="1">HOA</shortName>
        <ecNumber evidence="1">4.1.3.39</ecNumber>
    </recommendedName>
    <alternativeName>
        <fullName evidence="1">4-hydroxy-2-keto-pentanoic acid aldolase</fullName>
    </alternativeName>
    <alternativeName>
        <fullName evidence="1">4-hydroxy-2-oxopentanoate aldolase</fullName>
    </alternativeName>
</protein>
<feature type="chain" id="PRO_0000387925" description="4-hydroxy-2-oxovalerate aldolase">
    <location>
        <begin position="1"/>
        <end position="340"/>
    </location>
</feature>
<feature type="domain" description="Pyruvate carboxyltransferase" evidence="1">
    <location>
        <begin position="4"/>
        <end position="255"/>
    </location>
</feature>
<feature type="active site" description="Proton acceptor" evidence="1">
    <location>
        <position position="16"/>
    </location>
</feature>
<feature type="binding site" evidence="1">
    <location>
        <begin position="12"/>
        <end position="13"/>
    </location>
    <ligand>
        <name>substrate</name>
    </ligand>
</feature>
<feature type="binding site" evidence="1">
    <location>
        <position position="13"/>
    </location>
    <ligand>
        <name>Mn(2+)</name>
        <dbReference type="ChEBI" id="CHEBI:29035"/>
    </ligand>
</feature>
<feature type="binding site" evidence="1">
    <location>
        <position position="166"/>
    </location>
    <ligand>
        <name>substrate</name>
    </ligand>
</feature>
<feature type="binding site" evidence="1">
    <location>
        <position position="194"/>
    </location>
    <ligand>
        <name>Mn(2+)</name>
        <dbReference type="ChEBI" id="CHEBI:29035"/>
    </ligand>
</feature>
<feature type="binding site" evidence="1">
    <location>
        <position position="194"/>
    </location>
    <ligand>
        <name>substrate</name>
    </ligand>
</feature>
<feature type="binding site" evidence="1">
    <location>
        <position position="196"/>
    </location>
    <ligand>
        <name>Mn(2+)</name>
        <dbReference type="ChEBI" id="CHEBI:29035"/>
    </ligand>
</feature>
<feature type="site" description="Transition state stabilizer" evidence="1">
    <location>
        <position position="12"/>
    </location>
</feature>
<keyword id="KW-0058">Aromatic hydrocarbons catabolism</keyword>
<keyword id="KW-0456">Lyase</keyword>
<keyword id="KW-0464">Manganese</keyword>
<keyword id="KW-0479">Metal-binding</keyword>
<reference key="1">
    <citation type="journal article" date="2008" name="J. Bacteriol.">
        <title>Genome sequence of the streptomycin-producing microorganism Streptomyces griseus IFO 13350.</title>
        <authorList>
            <person name="Ohnishi Y."/>
            <person name="Ishikawa J."/>
            <person name="Hara H."/>
            <person name="Suzuki H."/>
            <person name="Ikenoya M."/>
            <person name="Ikeda H."/>
            <person name="Yamashita A."/>
            <person name="Hattori M."/>
            <person name="Horinouchi S."/>
        </authorList>
    </citation>
    <scope>NUCLEOTIDE SEQUENCE [LARGE SCALE GENOMIC DNA]</scope>
    <source>
        <strain>JCM 4626 / CBS 651.72 / NBRC 13350 / KCC S-0626 / ISP 5235</strain>
    </source>
</reference>
<accession>B1VRH5</accession>